<proteinExistence type="inferred from homology"/>
<sequence length="101" mass="11850">MFIDNIYDQNIYTNIDFLDTNKQKNKKSNNFINHFQKALGEISNIQNNSKKNIEKFQSNHSDISLNDIMINLQKSSISIELAIQVRNRIISAYKEIMNQQI</sequence>
<accession>Q8KA46</accession>
<keyword id="KW-0975">Bacterial flagellum</keyword>
<reference key="1">
    <citation type="journal article" date="2002" name="Science">
        <title>50 million years of genomic stasis in endosymbiotic bacteria.</title>
        <authorList>
            <person name="Tamas I."/>
            <person name="Klasson L."/>
            <person name="Canbaeck B."/>
            <person name="Naeslund A.K."/>
            <person name="Eriksson A.-S."/>
            <person name="Wernegreen J.J."/>
            <person name="Sandstroem J.P."/>
            <person name="Moran N.A."/>
            <person name="Andersson S.G.E."/>
        </authorList>
    </citation>
    <scope>NUCLEOTIDE SEQUENCE [LARGE SCALE GENOMIC DNA]</scope>
    <source>
        <strain>Sg</strain>
    </source>
</reference>
<dbReference type="EMBL" id="AE013218">
    <property type="protein sequence ID" value="AAM67636.1"/>
    <property type="molecule type" value="Genomic_DNA"/>
</dbReference>
<dbReference type="RefSeq" id="WP_011053602.1">
    <property type="nucleotide sequence ID" value="NC_004061.1"/>
</dbReference>
<dbReference type="SMR" id="Q8KA46"/>
<dbReference type="STRING" id="198804.BUsg_066"/>
<dbReference type="GeneID" id="93003536"/>
<dbReference type="KEGG" id="bas:BUsg_066"/>
<dbReference type="eggNOG" id="COG1677">
    <property type="taxonomic scope" value="Bacteria"/>
</dbReference>
<dbReference type="HOGENOM" id="CLU_147249_0_2_6"/>
<dbReference type="Proteomes" id="UP000000416">
    <property type="component" value="Chromosome"/>
</dbReference>
<dbReference type="GO" id="GO:0009425">
    <property type="term" value="C:bacterial-type flagellum basal body"/>
    <property type="evidence" value="ECO:0007669"/>
    <property type="project" value="UniProtKB-SubCell"/>
</dbReference>
<dbReference type="GO" id="GO:0003774">
    <property type="term" value="F:cytoskeletal motor activity"/>
    <property type="evidence" value="ECO:0007669"/>
    <property type="project" value="InterPro"/>
</dbReference>
<dbReference type="GO" id="GO:0005198">
    <property type="term" value="F:structural molecule activity"/>
    <property type="evidence" value="ECO:0007669"/>
    <property type="project" value="InterPro"/>
</dbReference>
<dbReference type="GO" id="GO:0071973">
    <property type="term" value="P:bacterial-type flagellum-dependent cell motility"/>
    <property type="evidence" value="ECO:0007669"/>
    <property type="project" value="InterPro"/>
</dbReference>
<dbReference type="HAMAP" id="MF_00724">
    <property type="entry name" value="FliE"/>
    <property type="match status" value="1"/>
</dbReference>
<dbReference type="InterPro" id="IPR001624">
    <property type="entry name" value="FliE"/>
</dbReference>
<dbReference type="NCBIfam" id="TIGR00205">
    <property type="entry name" value="fliE"/>
    <property type="match status" value="1"/>
</dbReference>
<dbReference type="PANTHER" id="PTHR34653">
    <property type="match status" value="1"/>
</dbReference>
<dbReference type="PANTHER" id="PTHR34653:SF1">
    <property type="entry name" value="FLAGELLAR HOOK-BASAL BODY COMPLEX PROTEIN FLIE"/>
    <property type="match status" value="1"/>
</dbReference>
<dbReference type="Pfam" id="PF02049">
    <property type="entry name" value="FliE"/>
    <property type="match status" value="1"/>
</dbReference>
<dbReference type="PRINTS" id="PR01006">
    <property type="entry name" value="FLGHOOKFLIE"/>
</dbReference>
<dbReference type="SUPFAM" id="SSF64518">
    <property type="entry name" value="Phase 1 flagellin"/>
    <property type="match status" value="1"/>
</dbReference>
<feature type="chain" id="PRO_0000105536" description="Flagellar hook-basal body complex protein FliE">
    <location>
        <begin position="1"/>
        <end position="101"/>
    </location>
</feature>
<name>FLIE_BUCAP</name>
<protein>
    <recommendedName>
        <fullName>Flagellar hook-basal body complex protein FliE</fullName>
    </recommendedName>
</protein>
<evidence type="ECO:0000250" key="1"/>
<evidence type="ECO:0000305" key="2"/>
<gene>
    <name type="primary">fliE</name>
    <name type="ordered locus">BUsg_066</name>
</gene>
<comment type="subcellular location">
    <subcellularLocation>
        <location evidence="1">Bacterial flagellum basal body</location>
    </subcellularLocation>
</comment>
<comment type="similarity">
    <text evidence="2">Belongs to the FliE family.</text>
</comment>
<organism>
    <name type="scientific">Buchnera aphidicola subsp. Schizaphis graminum (strain Sg)</name>
    <dbReference type="NCBI Taxonomy" id="198804"/>
    <lineage>
        <taxon>Bacteria</taxon>
        <taxon>Pseudomonadati</taxon>
        <taxon>Pseudomonadota</taxon>
        <taxon>Gammaproteobacteria</taxon>
        <taxon>Enterobacterales</taxon>
        <taxon>Erwiniaceae</taxon>
        <taxon>Buchnera</taxon>
    </lineage>
</organism>